<reference key="1">
    <citation type="journal article" date="2015" name="Genome Announc.">
        <title>Complete genome sequence of Anaeromyxobacter sp. Fw109-5, an anaerobic, metal-reducing bacterium isolated from a contaminated subsurface environment.</title>
        <authorList>
            <person name="Hwang C."/>
            <person name="Copeland A."/>
            <person name="Lucas S."/>
            <person name="Lapidus A."/>
            <person name="Barry K."/>
            <person name="Glavina Del Rio T."/>
            <person name="Dalin E."/>
            <person name="Tice H."/>
            <person name="Pitluck S."/>
            <person name="Sims D."/>
            <person name="Brettin T."/>
            <person name="Bruce D.C."/>
            <person name="Detter J.C."/>
            <person name="Han C.S."/>
            <person name="Schmutz J."/>
            <person name="Larimer F.W."/>
            <person name="Land M.L."/>
            <person name="Hauser L.J."/>
            <person name="Kyrpides N."/>
            <person name="Lykidis A."/>
            <person name="Richardson P."/>
            <person name="Belieav A."/>
            <person name="Sanford R.A."/>
            <person name="Loeffler F.E."/>
            <person name="Fields M.W."/>
        </authorList>
    </citation>
    <scope>NUCLEOTIDE SEQUENCE [LARGE SCALE GENOMIC DNA]</scope>
    <source>
        <strain>Fw109-5</strain>
    </source>
</reference>
<name>SURE_ANADF</name>
<keyword id="KW-0963">Cytoplasm</keyword>
<keyword id="KW-0378">Hydrolase</keyword>
<keyword id="KW-0479">Metal-binding</keyword>
<keyword id="KW-0547">Nucleotide-binding</keyword>
<keyword id="KW-1185">Reference proteome</keyword>
<comment type="function">
    <text evidence="1">Nucleotidase that shows phosphatase activity on nucleoside 5'-monophosphates.</text>
</comment>
<comment type="catalytic activity">
    <reaction evidence="1">
        <text>a ribonucleoside 5'-phosphate + H2O = a ribonucleoside + phosphate</text>
        <dbReference type="Rhea" id="RHEA:12484"/>
        <dbReference type="ChEBI" id="CHEBI:15377"/>
        <dbReference type="ChEBI" id="CHEBI:18254"/>
        <dbReference type="ChEBI" id="CHEBI:43474"/>
        <dbReference type="ChEBI" id="CHEBI:58043"/>
        <dbReference type="EC" id="3.1.3.5"/>
    </reaction>
</comment>
<comment type="cofactor">
    <cofactor evidence="1">
        <name>a divalent metal cation</name>
        <dbReference type="ChEBI" id="CHEBI:60240"/>
    </cofactor>
    <text evidence="1">Binds 1 divalent metal cation per subunit.</text>
</comment>
<comment type="subcellular location">
    <subcellularLocation>
        <location evidence="1">Cytoplasm</location>
    </subcellularLocation>
</comment>
<comment type="similarity">
    <text evidence="1">Belongs to the SurE nucleotidase family.</text>
</comment>
<accession>A7H8F6</accession>
<evidence type="ECO:0000255" key="1">
    <source>
        <dbReference type="HAMAP-Rule" id="MF_00060"/>
    </source>
</evidence>
<organism>
    <name type="scientific">Anaeromyxobacter sp. (strain Fw109-5)</name>
    <dbReference type="NCBI Taxonomy" id="404589"/>
    <lineage>
        <taxon>Bacteria</taxon>
        <taxon>Pseudomonadati</taxon>
        <taxon>Myxococcota</taxon>
        <taxon>Myxococcia</taxon>
        <taxon>Myxococcales</taxon>
        <taxon>Cystobacterineae</taxon>
        <taxon>Anaeromyxobacteraceae</taxon>
        <taxon>Anaeromyxobacter</taxon>
    </lineage>
</organism>
<protein>
    <recommendedName>
        <fullName evidence="1">5'-nucleotidase SurE</fullName>
        <ecNumber evidence="1">3.1.3.5</ecNumber>
    </recommendedName>
    <alternativeName>
        <fullName evidence="1">Nucleoside 5'-monophosphate phosphohydrolase</fullName>
    </alternativeName>
</protein>
<feature type="chain" id="PRO_1000007701" description="5'-nucleotidase SurE">
    <location>
        <begin position="1"/>
        <end position="254"/>
    </location>
</feature>
<feature type="binding site" evidence="1">
    <location>
        <position position="8"/>
    </location>
    <ligand>
        <name>a divalent metal cation</name>
        <dbReference type="ChEBI" id="CHEBI:60240"/>
    </ligand>
</feature>
<feature type="binding site" evidence="1">
    <location>
        <position position="9"/>
    </location>
    <ligand>
        <name>a divalent metal cation</name>
        <dbReference type="ChEBI" id="CHEBI:60240"/>
    </ligand>
</feature>
<feature type="binding site" evidence="1">
    <location>
        <position position="38"/>
    </location>
    <ligand>
        <name>a divalent metal cation</name>
        <dbReference type="ChEBI" id="CHEBI:60240"/>
    </ligand>
</feature>
<feature type="binding site" evidence="1">
    <location>
        <position position="91"/>
    </location>
    <ligand>
        <name>a divalent metal cation</name>
        <dbReference type="ChEBI" id="CHEBI:60240"/>
    </ligand>
</feature>
<proteinExistence type="inferred from homology"/>
<sequence>MRVLLSNDDGVHAPGLKALADAFEGDEVWVVAPDREQSASSHAISLHRPLRLFEMAPRWYAVDGTPTDAVYMGLNHVLRGARPDVVVSGINHGPNLGNDVLYSGTVAAAMEGALLGVHALAVSLACSPPHVFDEAARFAVALARRVVATQPPAPLLLNVNVPRGPVRGYRFTRLGRRTYGNEVVEKTDPRGRKYYWIGGEGGPTNEDIPGSDCNCVLGEGLVAVTPLHLDSSHDAVLQGLRSWTVPGYEKEPAL</sequence>
<dbReference type="EC" id="3.1.3.5" evidence="1"/>
<dbReference type="EMBL" id="CP000769">
    <property type="protein sequence ID" value="ABS25002.1"/>
    <property type="molecule type" value="Genomic_DNA"/>
</dbReference>
<dbReference type="RefSeq" id="WP_011985108.1">
    <property type="nucleotide sequence ID" value="NC_009675.1"/>
</dbReference>
<dbReference type="SMR" id="A7H8F6"/>
<dbReference type="STRING" id="404589.Anae109_0790"/>
<dbReference type="KEGG" id="afw:Anae109_0790"/>
<dbReference type="eggNOG" id="COG0496">
    <property type="taxonomic scope" value="Bacteria"/>
</dbReference>
<dbReference type="HOGENOM" id="CLU_045192_1_2_7"/>
<dbReference type="OrthoDB" id="9780815at2"/>
<dbReference type="Proteomes" id="UP000006382">
    <property type="component" value="Chromosome"/>
</dbReference>
<dbReference type="GO" id="GO:0005737">
    <property type="term" value="C:cytoplasm"/>
    <property type="evidence" value="ECO:0007669"/>
    <property type="project" value="UniProtKB-SubCell"/>
</dbReference>
<dbReference type="GO" id="GO:0008254">
    <property type="term" value="F:3'-nucleotidase activity"/>
    <property type="evidence" value="ECO:0007669"/>
    <property type="project" value="TreeGrafter"/>
</dbReference>
<dbReference type="GO" id="GO:0008253">
    <property type="term" value="F:5'-nucleotidase activity"/>
    <property type="evidence" value="ECO:0007669"/>
    <property type="project" value="UniProtKB-UniRule"/>
</dbReference>
<dbReference type="GO" id="GO:0004309">
    <property type="term" value="F:exopolyphosphatase activity"/>
    <property type="evidence" value="ECO:0007669"/>
    <property type="project" value="TreeGrafter"/>
</dbReference>
<dbReference type="GO" id="GO:0046872">
    <property type="term" value="F:metal ion binding"/>
    <property type="evidence" value="ECO:0007669"/>
    <property type="project" value="UniProtKB-UniRule"/>
</dbReference>
<dbReference type="GO" id="GO:0000166">
    <property type="term" value="F:nucleotide binding"/>
    <property type="evidence" value="ECO:0007669"/>
    <property type="project" value="UniProtKB-KW"/>
</dbReference>
<dbReference type="FunFam" id="3.40.1210.10:FF:000001">
    <property type="entry name" value="5'/3'-nucleotidase SurE"/>
    <property type="match status" value="1"/>
</dbReference>
<dbReference type="Gene3D" id="3.40.1210.10">
    <property type="entry name" value="Survival protein SurE-like phosphatase/nucleotidase"/>
    <property type="match status" value="1"/>
</dbReference>
<dbReference type="HAMAP" id="MF_00060">
    <property type="entry name" value="SurE"/>
    <property type="match status" value="1"/>
</dbReference>
<dbReference type="InterPro" id="IPR030048">
    <property type="entry name" value="SurE"/>
</dbReference>
<dbReference type="InterPro" id="IPR002828">
    <property type="entry name" value="SurE-like_Pase/nucleotidase"/>
</dbReference>
<dbReference type="InterPro" id="IPR036523">
    <property type="entry name" value="SurE-like_sf"/>
</dbReference>
<dbReference type="NCBIfam" id="NF001490">
    <property type="entry name" value="PRK00346.1-4"/>
    <property type="match status" value="1"/>
</dbReference>
<dbReference type="NCBIfam" id="TIGR00087">
    <property type="entry name" value="surE"/>
    <property type="match status" value="1"/>
</dbReference>
<dbReference type="PANTHER" id="PTHR30457">
    <property type="entry name" value="5'-NUCLEOTIDASE SURE"/>
    <property type="match status" value="1"/>
</dbReference>
<dbReference type="PANTHER" id="PTHR30457:SF12">
    <property type="entry name" value="5'_3'-NUCLEOTIDASE SURE"/>
    <property type="match status" value="1"/>
</dbReference>
<dbReference type="Pfam" id="PF01975">
    <property type="entry name" value="SurE"/>
    <property type="match status" value="1"/>
</dbReference>
<dbReference type="SUPFAM" id="SSF64167">
    <property type="entry name" value="SurE-like"/>
    <property type="match status" value="1"/>
</dbReference>
<gene>
    <name evidence="1" type="primary">surE</name>
    <name type="ordered locus">Anae109_0790</name>
</gene>